<accession>Q661R7</accession>
<name>RL28_BORGP</name>
<feature type="chain" id="PRO_0000178438" description="Large ribosomal subunit protein bL28">
    <location>
        <begin position="1"/>
        <end position="92"/>
    </location>
</feature>
<sequence>MARKCEITGKKTMFGNNVPRKGLAKKKGGAGQHIGVKTKRTFKVNLINKKFFIPELGRSINIKVSANALRSISKVGLDAFLKKNCKKIENFL</sequence>
<protein>
    <recommendedName>
        <fullName evidence="1">Large ribosomal subunit protein bL28</fullName>
    </recommendedName>
    <alternativeName>
        <fullName evidence="2">50S ribosomal protein L28</fullName>
    </alternativeName>
</protein>
<keyword id="KW-0687">Ribonucleoprotein</keyword>
<keyword id="KW-0689">Ribosomal protein</keyword>
<reference key="1">
    <citation type="journal article" date="2004" name="Nucleic Acids Res.">
        <title>Comparative analysis of the Borrelia garinii genome.</title>
        <authorList>
            <person name="Gloeckner G."/>
            <person name="Lehmann R."/>
            <person name="Romualdi A."/>
            <person name="Pradella S."/>
            <person name="Schulte-Spechtel U."/>
            <person name="Schilhabel M."/>
            <person name="Wilske B."/>
            <person name="Suehnel J."/>
            <person name="Platzer M."/>
        </authorList>
    </citation>
    <scope>NUCLEOTIDE SEQUENCE [LARGE SCALE GENOMIC DNA]</scope>
    <source>
        <strain>ATCC BAA-2496 / DSM 23469 / PBi</strain>
    </source>
</reference>
<comment type="similarity">
    <text evidence="1">Belongs to the bacterial ribosomal protein bL28 family.</text>
</comment>
<organism>
    <name type="scientific">Borrelia garinii subsp. bavariensis (strain ATCC BAA-2496 / DSM 23469 / PBi)</name>
    <name type="common">Borreliella bavariensis</name>
    <dbReference type="NCBI Taxonomy" id="290434"/>
    <lineage>
        <taxon>Bacteria</taxon>
        <taxon>Pseudomonadati</taxon>
        <taxon>Spirochaetota</taxon>
        <taxon>Spirochaetia</taxon>
        <taxon>Spirochaetales</taxon>
        <taxon>Borreliaceae</taxon>
        <taxon>Borreliella</taxon>
    </lineage>
</organism>
<gene>
    <name evidence="1" type="primary">rpmB</name>
    <name type="ordered locus">BG0351</name>
</gene>
<evidence type="ECO:0000255" key="1">
    <source>
        <dbReference type="HAMAP-Rule" id="MF_00373"/>
    </source>
</evidence>
<evidence type="ECO:0000305" key="2"/>
<dbReference type="EMBL" id="CP000013">
    <property type="protein sequence ID" value="AAU07204.1"/>
    <property type="molecule type" value="Genomic_DNA"/>
</dbReference>
<dbReference type="RefSeq" id="WP_011193679.1">
    <property type="nucleotide sequence ID" value="NZ_CP028872.1"/>
</dbReference>
<dbReference type="SMR" id="Q661R7"/>
<dbReference type="GeneID" id="45161139"/>
<dbReference type="KEGG" id="bga:BG0351"/>
<dbReference type="eggNOG" id="COG0227">
    <property type="taxonomic scope" value="Bacteria"/>
</dbReference>
<dbReference type="HOGENOM" id="CLU_064548_3_2_12"/>
<dbReference type="OrthoDB" id="9805609at2"/>
<dbReference type="Proteomes" id="UP000002276">
    <property type="component" value="Chromosome"/>
</dbReference>
<dbReference type="GO" id="GO:1990904">
    <property type="term" value="C:ribonucleoprotein complex"/>
    <property type="evidence" value="ECO:0007669"/>
    <property type="project" value="UniProtKB-KW"/>
</dbReference>
<dbReference type="GO" id="GO:0005840">
    <property type="term" value="C:ribosome"/>
    <property type="evidence" value="ECO:0007669"/>
    <property type="project" value="UniProtKB-KW"/>
</dbReference>
<dbReference type="GO" id="GO:0003735">
    <property type="term" value="F:structural constituent of ribosome"/>
    <property type="evidence" value="ECO:0007669"/>
    <property type="project" value="InterPro"/>
</dbReference>
<dbReference type="GO" id="GO:0006412">
    <property type="term" value="P:translation"/>
    <property type="evidence" value="ECO:0007669"/>
    <property type="project" value="UniProtKB-UniRule"/>
</dbReference>
<dbReference type="Gene3D" id="2.30.170.40">
    <property type="entry name" value="Ribosomal protein L28/L24"/>
    <property type="match status" value="1"/>
</dbReference>
<dbReference type="HAMAP" id="MF_00373">
    <property type="entry name" value="Ribosomal_bL28"/>
    <property type="match status" value="1"/>
</dbReference>
<dbReference type="InterPro" id="IPR026569">
    <property type="entry name" value="Ribosomal_bL28"/>
</dbReference>
<dbReference type="InterPro" id="IPR034704">
    <property type="entry name" value="Ribosomal_bL28/bL31-like_sf"/>
</dbReference>
<dbReference type="InterPro" id="IPR001383">
    <property type="entry name" value="Ribosomal_bL28_bact-type"/>
</dbReference>
<dbReference type="InterPro" id="IPR037147">
    <property type="entry name" value="Ribosomal_bL28_sf"/>
</dbReference>
<dbReference type="NCBIfam" id="TIGR00009">
    <property type="entry name" value="L28"/>
    <property type="match status" value="1"/>
</dbReference>
<dbReference type="PANTHER" id="PTHR13528">
    <property type="entry name" value="39S RIBOSOMAL PROTEIN L28, MITOCHONDRIAL"/>
    <property type="match status" value="1"/>
</dbReference>
<dbReference type="PANTHER" id="PTHR13528:SF2">
    <property type="entry name" value="LARGE RIBOSOMAL SUBUNIT PROTEIN BL28M"/>
    <property type="match status" value="1"/>
</dbReference>
<dbReference type="Pfam" id="PF00830">
    <property type="entry name" value="Ribosomal_L28"/>
    <property type="match status" value="1"/>
</dbReference>
<dbReference type="SUPFAM" id="SSF143800">
    <property type="entry name" value="L28p-like"/>
    <property type="match status" value="1"/>
</dbReference>
<proteinExistence type="inferred from homology"/>